<accession>P25045</accession>
<accession>D6W0C3</accession>
<evidence type="ECO:0000269" key="1">
    <source>
    </source>
</evidence>
<evidence type="ECO:0000269" key="2">
    <source>
    </source>
</evidence>
<evidence type="ECO:0000269" key="3">
    <source>
    </source>
</evidence>
<evidence type="ECO:0000269" key="4">
    <source>
    </source>
</evidence>
<evidence type="ECO:0000269" key="5">
    <source>
    </source>
</evidence>
<evidence type="ECO:0000269" key="6">
    <source>
    </source>
</evidence>
<evidence type="ECO:0000305" key="7"/>
<evidence type="ECO:0007744" key="8">
    <source>
    </source>
</evidence>
<proteinExistence type="evidence at protein level"/>
<organism>
    <name type="scientific">Saccharomyces cerevisiae (strain ATCC 204508 / S288c)</name>
    <name type="common">Baker's yeast</name>
    <dbReference type="NCBI Taxonomy" id="559292"/>
    <lineage>
        <taxon>Eukaryota</taxon>
        <taxon>Fungi</taxon>
        <taxon>Dikarya</taxon>
        <taxon>Ascomycota</taxon>
        <taxon>Saccharomycotina</taxon>
        <taxon>Saccharomycetes</taxon>
        <taxon>Saccharomycetales</taxon>
        <taxon>Saccharomycetaceae</taxon>
        <taxon>Saccharomyces</taxon>
    </lineage>
</organism>
<protein>
    <recommendedName>
        <fullName>Serine palmitoyltransferase 1</fullName>
        <shortName>SPT 1</shortName>
        <shortName>SPT1</shortName>
        <ecNumber>2.3.1.50</ecNumber>
    </recommendedName>
    <alternativeName>
        <fullName>Long chain base biosynthesis protein 1</fullName>
    </alternativeName>
</protein>
<feature type="chain" id="PRO_0000163856" description="Serine palmitoyltransferase 1">
    <location>
        <begin position="1"/>
        <end position="558"/>
    </location>
</feature>
<feature type="topological domain" description="Lumenal" evidence="4">
    <location>
        <begin position="1"/>
        <end position="49"/>
    </location>
</feature>
<feature type="transmembrane region" description="Helical">
    <location>
        <begin position="50"/>
        <end position="84"/>
    </location>
</feature>
<feature type="topological domain" description="Cytoplasmic" evidence="4">
    <location>
        <begin position="85"/>
        <end position="341"/>
    </location>
</feature>
<feature type="transmembrane region" description="Helical">
    <location>
        <begin position="342"/>
        <end position="371"/>
    </location>
</feature>
<feature type="topological domain" description="Lumenal" evidence="4">
    <location>
        <begin position="372"/>
        <end position="424"/>
    </location>
</feature>
<feature type="transmembrane region" description="Helical">
    <location>
        <begin position="425"/>
        <end position="457"/>
    </location>
</feature>
<feature type="topological domain" description="Cytoplasmic" evidence="4">
    <location>
        <begin position="458"/>
        <end position="558"/>
    </location>
</feature>
<feature type="modified residue" description="Phosphothreonine" evidence="8">
    <location>
        <position position="121"/>
    </location>
</feature>
<feature type="mutagenesis site" description="No effect on stability. No effect on LCB2 stabilization." evidence="4">
    <original>YLW</original>
    <variation>DRS</variation>
    <location>
        <begin position="24"/>
        <end position="26"/>
    </location>
</feature>
<feature type="mutagenesis site" description="No effect on stability. No effect on LCB2 stabilization." evidence="4">
    <location>
        <begin position="50"/>
        <end position="85"/>
    </location>
</feature>
<feature type="mutagenesis site" description="No effect on stability. No effect on LCB2 stabilization." evidence="4">
    <original>YGI</original>
    <variation>DVK</variation>
    <location>
        <begin position="66"/>
        <end position="68"/>
    </location>
</feature>
<feature type="mutagenesis site" description="Loss of activity. No effect on interaction with LCB2." evidence="2">
    <original>C</original>
    <variation>W</variation>
    <variation>Y</variation>
    <location>
        <position position="180"/>
    </location>
</feature>
<feature type="mutagenesis site" description="Loss of activity. No effect on interaction with LCB2." evidence="2">
    <original>V</original>
    <variation>D</variation>
    <location>
        <position position="191"/>
    </location>
</feature>
<feature type="mutagenesis site" description="Unstable. Destabilizes LCB2." evidence="4">
    <location>
        <begin position="342"/>
        <end position="371"/>
    </location>
</feature>
<feature type="mutagenesis site" description="No effect on stability. Destabilizes LCB2." evidence="4">
    <location>
        <begin position="371"/>
        <end position="386"/>
    </location>
</feature>
<feature type="mutagenesis site" description="Unstable. Destabilizes LCB2." evidence="4">
    <location>
        <begin position="386"/>
        <end position="416"/>
    </location>
</feature>
<feature type="mutagenesis site" description="No effect on stability. Destabilizes LCB2." evidence="4">
    <location>
        <begin position="416"/>
        <end position="425"/>
    </location>
</feature>
<feature type="mutagenesis site" description="Unstable. Destabilizes LCB2." evidence="4">
    <location>
        <begin position="433"/>
        <end position="458"/>
    </location>
</feature>
<feature type="mutagenesis site" description="No effect on stability. Partially stabilizes LCB2." evidence="4">
    <original>IL</original>
    <variation>AS</variation>
    <location>
        <begin position="549"/>
        <end position="550"/>
    </location>
</feature>
<feature type="mutagenesis site" description="No effect on stability. Partially stabilizes LCB2." evidence="4">
    <original>IL</original>
    <variation>PR</variation>
    <location>
        <begin position="549"/>
        <end position="550"/>
    </location>
</feature>
<feature type="sequence conflict" description="In Ref. 1; AAA34739." evidence="7" ref="1">
    <original>A</original>
    <variation>P</variation>
    <location>
        <position position="443"/>
    </location>
</feature>
<comment type="function">
    <text evidence="2 6">Component of serine palmitoyltransferase (SPT), which catalyzes the committed step in the synthesis of sphingolipids, the condensation of serine with palmitoyl CoA to form the long chain base 3-ketosphinganine.</text>
</comment>
<comment type="catalytic activity">
    <reaction evidence="1 2 4 6">
        <text>L-serine + hexadecanoyl-CoA + H(+) = 3-oxosphinganine + CO2 + CoA</text>
        <dbReference type="Rhea" id="RHEA:14761"/>
        <dbReference type="ChEBI" id="CHEBI:15378"/>
        <dbReference type="ChEBI" id="CHEBI:16526"/>
        <dbReference type="ChEBI" id="CHEBI:33384"/>
        <dbReference type="ChEBI" id="CHEBI:57287"/>
        <dbReference type="ChEBI" id="CHEBI:57379"/>
        <dbReference type="ChEBI" id="CHEBI:58299"/>
        <dbReference type="EC" id="2.3.1.50"/>
    </reaction>
</comment>
<comment type="cofactor">
    <cofactor>
        <name>pyridoxal 5'-phosphate</name>
        <dbReference type="ChEBI" id="CHEBI:597326"/>
    </cofactor>
</comment>
<comment type="pathway">
    <text>Lipid metabolism; sphingolipid metabolism.</text>
</comment>
<comment type="subunit">
    <text evidence="1 2 4 5 6">LCB1 and LCB2 encode essential subunits of the enzyme and form a heterodimer. Component of the SPOTS complex, at least composed of LCB1/2 (LCB1 and/or LCB2), ORM1/2 (ORM1 and/or ORM2), SAC1 and TSC3. Interacts with LCB2 and TSC3.</text>
</comment>
<comment type="interaction">
    <interactant intactId="EBI-10059">
        <id>P25045</id>
    </interactant>
    <interactant intactId="EBI-10067">
        <id>P40970</id>
        <label>LCB2</label>
    </interactant>
    <organismsDiffer>false</organismsDiffer>
    <experiments>10</experiments>
</comment>
<comment type="interaction">
    <interactant intactId="EBI-10059">
        <id>P25045</id>
    </interactant>
    <interactant intactId="EBI-12592">
        <id>P53224</id>
        <label>ORM1</label>
    </interactant>
    <organismsDiffer>false</organismsDiffer>
    <experiments>5</experiments>
</comment>
<comment type="interaction">
    <interactant intactId="EBI-10059">
        <id>P25045</id>
    </interactant>
    <interactant intactId="EBI-34916">
        <id>Q06144</id>
        <label>ORM2</label>
    </interactant>
    <organismsDiffer>false</organismsDiffer>
    <experiments>7</experiments>
</comment>
<comment type="subcellular location">
    <subcellularLocation>
        <location>Cytoplasm</location>
    </subcellularLocation>
    <subcellularLocation>
        <location>Endoplasmic reticulum membrane</location>
        <topology>Multi-pass membrane protein</topology>
    </subcellularLocation>
</comment>
<comment type="domain">
    <text>The first transmembrane domain is not required for stability, membrane association, interaction with LCB2, or enzymatic activity. The second and third transmembrane domains are required for stability and interaction with LCB2.</text>
</comment>
<comment type="miscellaneous">
    <text evidence="3">Present with 22400 molecules/cell in log phase SD medium.</text>
</comment>
<comment type="similarity">
    <text evidence="7">Belongs to the class-II pyridoxal-phosphate-dependent aminotransferase family.</text>
</comment>
<reference key="1">
    <citation type="journal article" date="1991" name="J. Bacteriol.">
        <title>Cloning and characterization of LCB1, a Saccharomyces gene required for biosynthesis of the long-chain base component of sphingolipids.</title>
        <authorList>
            <person name="Buede R."/>
            <person name="Rinker-Schaffer C."/>
            <person name="Pinto W.J."/>
            <person name="Lester R.L."/>
            <person name="Dickson R.C."/>
        </authorList>
    </citation>
    <scope>NUCLEOTIDE SEQUENCE [GENOMIC DNA]</scope>
</reference>
<reference key="2">
    <citation type="journal article" date="1997" name="Nature">
        <title>The nucleotide sequence of Saccharomyces cerevisiae chromosome XIII.</title>
        <authorList>
            <person name="Bowman S."/>
            <person name="Churcher C.M."/>
            <person name="Badcock K."/>
            <person name="Brown D."/>
            <person name="Chillingworth T."/>
            <person name="Connor R."/>
            <person name="Dedman K."/>
            <person name="Devlin K."/>
            <person name="Gentles S."/>
            <person name="Hamlin N."/>
            <person name="Hunt S."/>
            <person name="Jagels K."/>
            <person name="Lye G."/>
            <person name="Moule S."/>
            <person name="Odell C."/>
            <person name="Pearson D."/>
            <person name="Rajandream M.A."/>
            <person name="Rice P."/>
            <person name="Skelton J."/>
            <person name="Walsh S.V."/>
            <person name="Whitehead S."/>
            <person name="Barrell B.G."/>
        </authorList>
    </citation>
    <scope>NUCLEOTIDE SEQUENCE [LARGE SCALE GENOMIC DNA]</scope>
    <source>
        <strain>ATCC 204508 / S288c</strain>
    </source>
</reference>
<reference key="3">
    <citation type="journal article" date="2014" name="G3 (Bethesda)">
        <title>The reference genome sequence of Saccharomyces cerevisiae: Then and now.</title>
        <authorList>
            <person name="Engel S.R."/>
            <person name="Dietrich F.S."/>
            <person name="Fisk D.G."/>
            <person name="Binkley G."/>
            <person name="Balakrishnan R."/>
            <person name="Costanzo M.C."/>
            <person name="Dwight S.S."/>
            <person name="Hitz B.C."/>
            <person name="Karra K."/>
            <person name="Nash R.S."/>
            <person name="Weng S."/>
            <person name="Wong E.D."/>
            <person name="Lloyd P."/>
            <person name="Skrzypek M.S."/>
            <person name="Miyasato S.R."/>
            <person name="Simison M."/>
            <person name="Cherry J.M."/>
        </authorList>
    </citation>
    <scope>GENOME REANNOTATION</scope>
    <source>
        <strain>ATCC 204508 / S288c</strain>
    </source>
</reference>
<reference key="4">
    <citation type="journal article" date="2007" name="Genome Res.">
        <title>Approaching a complete repository of sequence-verified protein-encoding clones for Saccharomyces cerevisiae.</title>
        <authorList>
            <person name="Hu Y."/>
            <person name="Rolfs A."/>
            <person name="Bhullar B."/>
            <person name="Murthy T.V.S."/>
            <person name="Zhu C."/>
            <person name="Berger M.F."/>
            <person name="Camargo A.A."/>
            <person name="Kelley F."/>
            <person name="McCarron S."/>
            <person name="Jepson D."/>
            <person name="Richardson A."/>
            <person name="Raphael J."/>
            <person name="Moreira D."/>
            <person name="Taycher E."/>
            <person name="Zuo D."/>
            <person name="Mohr S."/>
            <person name="Kane M.F."/>
            <person name="Williamson J."/>
            <person name="Simpson A.J.G."/>
            <person name="Bulyk M.L."/>
            <person name="Harlow E."/>
            <person name="Marsischky G."/>
            <person name="Kolodner R.D."/>
            <person name="LaBaer J."/>
        </authorList>
    </citation>
    <scope>NUCLEOTIDE SEQUENCE [GENOMIC DNA]</scope>
    <source>
        <strain>ATCC 204508 / S288c</strain>
    </source>
</reference>
<reference key="5">
    <citation type="journal article" date="1994" name="Proc. Natl. Acad. Sci. U.S.A.">
        <title>The LCB2 gene of Saccharomyces and the related LCB1 gene encode subunits of serine palmitoyltransferase, the initial enzyme in sphingolipid synthesis.</title>
        <authorList>
            <person name="Nagiec M.M."/>
            <person name="Baltisberger J.A."/>
            <person name="Wells G.B."/>
            <person name="Lester R.L."/>
            <person name="Dickson R.C."/>
        </authorList>
    </citation>
    <scope>FUNCTION</scope>
    <scope>ENZYME ACTIVITY</scope>
    <scope>SUBUNIT</scope>
</reference>
<reference key="6">
    <citation type="journal article" date="2000" name="J. Biol. Chem.">
        <title>Tsc3p is an 80-amino acid protein associated with serine palmitoyltransferase and required for optimal enzyme activity.</title>
        <authorList>
            <person name="Gable K."/>
            <person name="Slife H."/>
            <person name="Bacikova D."/>
            <person name="Monaghan E."/>
            <person name="Dunn T.M."/>
        </authorList>
    </citation>
    <scope>ENZYME ACTIVITY</scope>
    <scope>INTERACTION WITH LCB2 AND TSC3</scope>
    <scope>SUBCELLULAR LOCATION</scope>
</reference>
<reference key="7">
    <citation type="journal article" date="2002" name="J. Biol. Chem.">
        <title>Mutations in the yeast LCB1 and LCB2 genes, including those corresponding to the hereditary sensory neuropathy type I mutations, dominantly inactivate serine palmitoyltransferase.</title>
        <authorList>
            <person name="Gable K."/>
            <person name="Han G."/>
            <person name="Monaghan E."/>
            <person name="Bacikova D."/>
            <person name="Natarajan M."/>
            <person name="Williams R."/>
            <person name="Dunn T.M."/>
        </authorList>
    </citation>
    <scope>FUNCTION</scope>
    <scope>ENZYME ACTIVITY</scope>
    <scope>SUBUNIT</scope>
    <scope>INTERACTION WITH LCB2</scope>
    <scope>MUTAGENESIS OF CYS-180 AND VAL-191</scope>
</reference>
<reference key="8">
    <citation type="journal article" date="2003" name="Nature">
        <title>Global analysis of protein localization in budding yeast.</title>
        <authorList>
            <person name="Huh W.-K."/>
            <person name="Falvo J.V."/>
            <person name="Gerke L.C."/>
            <person name="Carroll A.S."/>
            <person name="Howson R.W."/>
            <person name="Weissman J.S."/>
            <person name="O'Shea E.K."/>
        </authorList>
    </citation>
    <scope>SUBCELLULAR LOCATION [LARGE SCALE ANALYSIS]</scope>
</reference>
<reference key="9">
    <citation type="journal article" date="2003" name="Nature">
        <title>Global analysis of protein expression in yeast.</title>
        <authorList>
            <person name="Ghaemmaghami S."/>
            <person name="Huh W.-K."/>
            <person name="Bower K."/>
            <person name="Howson R.W."/>
            <person name="Belle A."/>
            <person name="Dephoure N."/>
            <person name="O'Shea E.K."/>
            <person name="Weissman J.S."/>
        </authorList>
    </citation>
    <scope>LEVEL OF PROTEIN EXPRESSION [LARGE SCALE ANALYSIS]</scope>
</reference>
<reference key="10">
    <citation type="journal article" date="2004" name="J. Biol. Chem.">
        <title>The topology of the Lcb1p subunit of yeast serine palmitoyltransferase.</title>
        <authorList>
            <person name="Han G."/>
            <person name="Gable K."/>
            <person name="Yan L."/>
            <person name="Natarajan M."/>
            <person name="Krishnamurthy J."/>
            <person name="Gupta S.D."/>
            <person name="Borovitskaya A."/>
            <person name="Harmon J.M."/>
            <person name="Dunn T.M."/>
        </authorList>
    </citation>
    <scope>ENZYME ACTIVITY</scope>
    <scope>INTERACTION WITH LCB2</scope>
    <scope>SUBCELLULAR LOCATION</scope>
    <scope>TOPOLOGY</scope>
    <scope>TRANSMEMBRANE DOMAINS</scope>
    <scope>MUTAGENESIS OF 24-TYR--TRP-26; 50-ALA--THR-85; 66-TYR--ILE-68; 342-LEU--ARG-371; 371-ARG--HIS-386; 386-HIS--SER-416; 416-SER--TYR-425; 433-GLN--THR-458 AND 549-ILE-LEU-550</scope>
</reference>
<reference key="11">
    <citation type="journal article" date="2007" name="J. Proteome Res.">
        <title>Large-scale phosphorylation analysis of alpha-factor-arrested Saccharomyces cerevisiae.</title>
        <authorList>
            <person name="Li X."/>
            <person name="Gerber S.A."/>
            <person name="Rudner A.D."/>
            <person name="Beausoleil S.A."/>
            <person name="Haas W."/>
            <person name="Villen J."/>
            <person name="Elias J.E."/>
            <person name="Gygi S.P."/>
        </authorList>
    </citation>
    <scope>PHOSPHORYLATION [LARGE SCALE ANALYSIS] AT THR-121</scope>
    <scope>IDENTIFICATION BY MASS SPECTROMETRY [LARGE SCALE ANALYSIS]</scope>
    <source>
        <strain>ADR376</strain>
    </source>
</reference>
<reference key="12">
    <citation type="journal article" date="2010" name="Nature">
        <title>Orm family proteins mediate sphingolipid homeostasis.</title>
        <authorList>
            <person name="Breslow D.K."/>
            <person name="Collins S.R."/>
            <person name="Bodenmiller B."/>
            <person name="Aebersold R."/>
            <person name="Simons K."/>
            <person name="Shevchenko A."/>
            <person name="Ejsing C.S."/>
            <person name="Weissman J.S."/>
        </authorList>
    </citation>
    <scope>IDENTIFICATION IN THE SPOTS COMPLEX</scope>
</reference>
<name>SPTC1_YEAST</name>
<keyword id="KW-0002">3D-structure</keyword>
<keyword id="KW-0012">Acyltransferase</keyword>
<keyword id="KW-0963">Cytoplasm</keyword>
<keyword id="KW-0256">Endoplasmic reticulum</keyword>
<keyword id="KW-0443">Lipid metabolism</keyword>
<keyword id="KW-0472">Membrane</keyword>
<keyword id="KW-0597">Phosphoprotein</keyword>
<keyword id="KW-0663">Pyridoxal phosphate</keyword>
<keyword id="KW-1185">Reference proteome</keyword>
<keyword id="KW-0746">Sphingolipid metabolism</keyword>
<keyword id="KW-0808">Transferase</keyword>
<keyword id="KW-0812">Transmembrane</keyword>
<keyword id="KW-1133">Transmembrane helix</keyword>
<sequence length="558" mass="62207">MAHIPEVLPKSIPIPAFIVTTSSYLWYYFNLVLTQIPGGQFIVSYIKKSHHDDPYRTTVEIGLILYGIIYYLSKPQQKKSLQAQKPNLSPQEIDALIEDWEPEPLVDPSATDEQSWRVAKTPVTMEMPIQNHITITRNNLQEKYTNVFNLASNNFLQLSATEPVKEVVKTTIKNYGVGACGPAGFYGNQDVHYTLEYDLAQFFGTQGSVLYGQDFCAAPSVLPAFTKRGDVIVADDQVSLPVQNALQLSRSTVYYFNHNDMNSLECLLNELTEQEKLEKLPAIPRKFIVTEGIFHNSGDLAPLPELTKLKNKYKFRLFVDETFSIGVLGATGRGLSEHFNMDRATAIDITVGSMATALGSTGGFVLGDSVMCLHQRIGSNAYCFSACLPAYTVTSVSKVLKLMDSNNDAVQTLQKLSKSLHDSFASDDSLRSYVIVTSSPVSAVLHLQLTPAYRSRKFGYTCEQLFETMSALQKKSQTNKFIEPYEEEEKFLQSIVDHALINYNVLITRNTIVLKQETLPIVPSLKICCNAAMSPEELKNACESVKQSILACCQESNK</sequence>
<dbReference type="EC" id="2.3.1.50"/>
<dbReference type="EMBL" id="M63674">
    <property type="protein sequence ID" value="AAA34739.1"/>
    <property type="molecule type" value="Genomic_DNA"/>
</dbReference>
<dbReference type="EMBL" id="X80836">
    <property type="protein sequence ID" value="CAA56805.1"/>
    <property type="molecule type" value="Genomic_DNA"/>
</dbReference>
<dbReference type="EMBL" id="AY693052">
    <property type="protein sequence ID" value="AAT93071.1"/>
    <property type="molecule type" value="Genomic_DNA"/>
</dbReference>
<dbReference type="EMBL" id="BK006946">
    <property type="protein sequence ID" value="DAA10197.1"/>
    <property type="molecule type" value="Genomic_DNA"/>
</dbReference>
<dbReference type="PIR" id="A43667">
    <property type="entry name" value="A43667"/>
</dbReference>
<dbReference type="RefSeq" id="NP_014025.1">
    <property type="nucleotide sequence ID" value="NM_001182805.1"/>
</dbReference>
<dbReference type="PDB" id="8C80">
    <property type="method" value="EM"/>
    <property type="resolution" value="3.40 A"/>
    <property type="chains" value="B=1-558"/>
</dbReference>
<dbReference type="PDB" id="8C81">
    <property type="method" value="EM"/>
    <property type="resolution" value="3.30 A"/>
    <property type="chains" value="B=1-558"/>
</dbReference>
<dbReference type="PDB" id="8C82">
    <property type="method" value="EM"/>
    <property type="resolution" value="3.40 A"/>
    <property type="chains" value="B/F=1-558"/>
</dbReference>
<dbReference type="PDB" id="8IAJ">
    <property type="method" value="EM"/>
    <property type="resolution" value="3.10 A"/>
    <property type="chains" value="A/E=106-558"/>
</dbReference>
<dbReference type="PDB" id="8IAK">
    <property type="method" value="EM"/>
    <property type="resolution" value="3.10 A"/>
    <property type="chains" value="A/E=106-558"/>
</dbReference>
<dbReference type="PDB" id="8IAM">
    <property type="method" value="EM"/>
    <property type="resolution" value="3.10 A"/>
    <property type="chains" value="A/E=106-558"/>
</dbReference>
<dbReference type="PDB" id="8QOF">
    <property type="method" value="EM"/>
    <property type="resolution" value="3.30 A"/>
    <property type="chains" value="B/F=1-558"/>
</dbReference>
<dbReference type="PDB" id="8QOG">
    <property type="method" value="EM"/>
    <property type="resolution" value="3.10 A"/>
    <property type="chains" value="B=1-558"/>
</dbReference>
<dbReference type="PDBsum" id="8C80"/>
<dbReference type="PDBsum" id="8C81"/>
<dbReference type="PDBsum" id="8C82"/>
<dbReference type="PDBsum" id="8IAJ"/>
<dbReference type="PDBsum" id="8IAK"/>
<dbReference type="PDBsum" id="8IAM"/>
<dbReference type="PDBsum" id="8QOF"/>
<dbReference type="PDBsum" id="8QOG"/>
<dbReference type="EMDB" id="EMD-16467"/>
<dbReference type="EMDB" id="EMD-16468"/>
<dbReference type="EMDB" id="EMD-16469"/>
<dbReference type="EMDB" id="EMD-18536"/>
<dbReference type="EMDB" id="EMD-18537"/>
<dbReference type="EMDB" id="EMD-35304"/>
<dbReference type="EMDB" id="EMD-35306"/>
<dbReference type="EMDB" id="EMD-35310"/>
<dbReference type="SMR" id="P25045"/>
<dbReference type="BioGRID" id="35476">
    <property type="interactions" value="657"/>
</dbReference>
<dbReference type="ComplexPortal" id="CPX-3158">
    <property type="entry name" value="SPOTS complex"/>
</dbReference>
<dbReference type="DIP" id="DIP-5249N"/>
<dbReference type="FunCoup" id="P25045">
    <property type="interactions" value="1053"/>
</dbReference>
<dbReference type="IntAct" id="P25045">
    <property type="interactions" value="15"/>
</dbReference>
<dbReference type="MINT" id="P25045"/>
<dbReference type="STRING" id="4932.YMR296C"/>
<dbReference type="iPTMnet" id="P25045"/>
<dbReference type="PaxDb" id="4932-YMR296C"/>
<dbReference type="PeptideAtlas" id="P25045"/>
<dbReference type="EnsemblFungi" id="YMR296C_mRNA">
    <property type="protein sequence ID" value="YMR296C"/>
    <property type="gene ID" value="YMR296C"/>
</dbReference>
<dbReference type="GeneID" id="855342"/>
<dbReference type="KEGG" id="sce:YMR296C"/>
<dbReference type="AGR" id="SGD:S000004911"/>
<dbReference type="SGD" id="S000004911">
    <property type="gene designation" value="LCB1"/>
</dbReference>
<dbReference type="VEuPathDB" id="FungiDB:YMR296C"/>
<dbReference type="eggNOG" id="KOG1358">
    <property type="taxonomic scope" value="Eukaryota"/>
</dbReference>
<dbReference type="GeneTree" id="ENSGT00550000074872"/>
<dbReference type="HOGENOM" id="CLU_015846_0_2_1"/>
<dbReference type="InParanoid" id="P25045"/>
<dbReference type="OMA" id="LTKYGCG"/>
<dbReference type="OrthoDB" id="3168162at2759"/>
<dbReference type="BioCyc" id="MetaCyc:YMR296C-MONOMER"/>
<dbReference type="BioCyc" id="YEAST:YMR296C-MONOMER"/>
<dbReference type="UniPathway" id="UPA00222"/>
<dbReference type="BioGRID-ORCS" id="855342">
    <property type="hits" value="5 hits in 10 CRISPR screens"/>
</dbReference>
<dbReference type="PRO" id="PR:P25045"/>
<dbReference type="Proteomes" id="UP000002311">
    <property type="component" value="Chromosome XIII"/>
</dbReference>
<dbReference type="RNAct" id="P25045">
    <property type="molecule type" value="protein"/>
</dbReference>
<dbReference type="GO" id="GO:0005783">
    <property type="term" value="C:endoplasmic reticulum"/>
    <property type="evidence" value="ECO:0000314"/>
    <property type="project" value="SGD"/>
</dbReference>
<dbReference type="GO" id="GO:0005789">
    <property type="term" value="C:endoplasmic reticulum membrane"/>
    <property type="evidence" value="ECO:0007669"/>
    <property type="project" value="UniProtKB-SubCell"/>
</dbReference>
<dbReference type="GO" id="GO:0017059">
    <property type="term" value="C:serine palmitoyltransferase complex"/>
    <property type="evidence" value="ECO:0000314"/>
    <property type="project" value="UniProtKB"/>
</dbReference>
<dbReference type="GO" id="GO:0030170">
    <property type="term" value="F:pyridoxal phosphate binding"/>
    <property type="evidence" value="ECO:0007669"/>
    <property type="project" value="InterPro"/>
</dbReference>
<dbReference type="GO" id="GO:0004758">
    <property type="term" value="F:serine C-palmitoyltransferase activity"/>
    <property type="evidence" value="ECO:0000315"/>
    <property type="project" value="SGD"/>
</dbReference>
<dbReference type="GO" id="GO:0046513">
    <property type="term" value="P:ceramide biosynthetic process"/>
    <property type="evidence" value="ECO:0000318"/>
    <property type="project" value="GO_Central"/>
</dbReference>
<dbReference type="GO" id="GO:0090156">
    <property type="term" value="P:intracellular sphingolipid homeostasis"/>
    <property type="evidence" value="ECO:0000303"/>
    <property type="project" value="ComplexPortal"/>
</dbReference>
<dbReference type="GO" id="GO:0030148">
    <property type="term" value="P:sphingolipid biosynthetic process"/>
    <property type="evidence" value="ECO:0000315"/>
    <property type="project" value="SGD"/>
</dbReference>
<dbReference type="GO" id="GO:0046512">
    <property type="term" value="P:sphingosine biosynthetic process"/>
    <property type="evidence" value="ECO:0000318"/>
    <property type="project" value="GO_Central"/>
</dbReference>
<dbReference type="FunFam" id="3.40.640.10:FF:000153">
    <property type="entry name" value="Serine palmitoyltransferase component"/>
    <property type="match status" value="1"/>
</dbReference>
<dbReference type="Gene3D" id="3.40.640.10">
    <property type="entry name" value="Type I PLP-dependent aspartate aminotransferase-like (Major domain)"/>
    <property type="match status" value="1"/>
</dbReference>
<dbReference type="InterPro" id="IPR004839">
    <property type="entry name" value="Aminotransferase_I/II_large"/>
</dbReference>
<dbReference type="InterPro" id="IPR050087">
    <property type="entry name" value="AON_synthase_class-II"/>
</dbReference>
<dbReference type="InterPro" id="IPR015424">
    <property type="entry name" value="PyrdxlP-dep_Trfase"/>
</dbReference>
<dbReference type="InterPro" id="IPR015421">
    <property type="entry name" value="PyrdxlP-dep_Trfase_major"/>
</dbReference>
<dbReference type="PANTHER" id="PTHR13693">
    <property type="entry name" value="CLASS II AMINOTRANSFERASE/8-AMINO-7-OXONONANOATE SYNTHASE"/>
    <property type="match status" value="1"/>
</dbReference>
<dbReference type="PANTHER" id="PTHR13693:SF2">
    <property type="entry name" value="SERINE PALMITOYLTRANSFERASE 1"/>
    <property type="match status" value="1"/>
</dbReference>
<dbReference type="Pfam" id="PF00155">
    <property type="entry name" value="Aminotran_1_2"/>
    <property type="match status" value="1"/>
</dbReference>
<dbReference type="SUPFAM" id="SSF53383">
    <property type="entry name" value="PLP-dependent transferases"/>
    <property type="match status" value="1"/>
</dbReference>
<gene>
    <name type="primary">LCB1</name>
    <name type="synonym">END8</name>
    <name type="synonym">TSC2</name>
    <name type="ordered locus">YMR296C</name>
</gene>